<organism>
    <name type="scientific">Rhizobium radiobacter</name>
    <name type="common">Agrobacterium tumefaciens</name>
    <name type="synonym">Agrobacterium radiobacter</name>
    <dbReference type="NCBI Taxonomy" id="358"/>
    <lineage>
        <taxon>Bacteria</taxon>
        <taxon>Pseudomonadati</taxon>
        <taxon>Pseudomonadota</taxon>
        <taxon>Alphaproteobacteria</taxon>
        <taxon>Hyphomicrobiales</taxon>
        <taxon>Rhizobiaceae</taxon>
        <taxon>Rhizobium/Agrobacterium group</taxon>
        <taxon>Agrobacterium</taxon>
        <taxon>Agrobacterium tumefaciens complex</taxon>
    </lineage>
</organism>
<gene>
    <name type="primary">sdh</name>
</gene>
<evidence type="ECO:0000250" key="1"/>
<evidence type="ECO:0000255" key="2">
    <source>
        <dbReference type="PROSITE-ProRule" id="PRU10001"/>
    </source>
</evidence>
<evidence type="ECO:0000269" key="3">
    <source>
    </source>
</evidence>
<evidence type="ECO:0000305" key="4"/>
<keyword id="KW-0903">Direct protein sequencing</keyword>
<keyword id="KW-0521">NADP</keyword>
<keyword id="KW-0560">Oxidoreductase</keyword>
<dbReference type="EC" id="1.1.1.276" evidence="3"/>
<dbReference type="EMBL" id="AB032242">
    <property type="protein sequence ID" value="BAB07807.1"/>
    <property type="molecule type" value="Genomic_DNA"/>
</dbReference>
<dbReference type="PIR" id="JC7857">
    <property type="entry name" value="JC7857"/>
</dbReference>
<dbReference type="RefSeq" id="WP_060723420.1">
    <property type="nucleotide sequence ID" value="NZ_SMCI01000007.1"/>
</dbReference>
<dbReference type="SMR" id="Q9KWN1"/>
<dbReference type="eggNOG" id="COG4221">
    <property type="taxonomic scope" value="Bacteria"/>
</dbReference>
<dbReference type="OrthoDB" id="658698at2"/>
<dbReference type="GO" id="GO:0031132">
    <property type="term" value="F:serine 3-dehydrogenase activity"/>
    <property type="evidence" value="ECO:0007669"/>
    <property type="project" value="UniProtKB-EC"/>
</dbReference>
<dbReference type="CDD" id="cd05346">
    <property type="entry name" value="SDR_c5"/>
    <property type="match status" value="1"/>
</dbReference>
<dbReference type="FunFam" id="3.40.50.720:FF:000047">
    <property type="entry name" value="NADP-dependent L-serine/L-allo-threonine dehydrogenase"/>
    <property type="match status" value="1"/>
</dbReference>
<dbReference type="Gene3D" id="3.40.50.720">
    <property type="entry name" value="NAD(P)-binding Rossmann-like Domain"/>
    <property type="match status" value="1"/>
</dbReference>
<dbReference type="InterPro" id="IPR036291">
    <property type="entry name" value="NAD(P)-bd_dom_sf"/>
</dbReference>
<dbReference type="InterPro" id="IPR020904">
    <property type="entry name" value="Sc_DH/Rdtase_CS"/>
</dbReference>
<dbReference type="InterPro" id="IPR002347">
    <property type="entry name" value="SDR_fam"/>
</dbReference>
<dbReference type="PANTHER" id="PTHR42901">
    <property type="entry name" value="ALCOHOL DEHYDROGENASE"/>
    <property type="match status" value="1"/>
</dbReference>
<dbReference type="PANTHER" id="PTHR42901:SF1">
    <property type="entry name" value="ALCOHOL DEHYDROGENASE"/>
    <property type="match status" value="1"/>
</dbReference>
<dbReference type="Pfam" id="PF00106">
    <property type="entry name" value="adh_short"/>
    <property type="match status" value="1"/>
</dbReference>
<dbReference type="PRINTS" id="PR00081">
    <property type="entry name" value="GDHRDH"/>
</dbReference>
<dbReference type="PRINTS" id="PR00080">
    <property type="entry name" value="SDRFAMILY"/>
</dbReference>
<dbReference type="SMART" id="SM00822">
    <property type="entry name" value="PKS_KR"/>
    <property type="match status" value="1"/>
</dbReference>
<dbReference type="SUPFAM" id="SSF51735">
    <property type="entry name" value="NAD(P)-binding Rossmann-fold domains"/>
    <property type="match status" value="1"/>
</dbReference>
<dbReference type="PROSITE" id="PS00061">
    <property type="entry name" value="ADH_SHORT"/>
    <property type="match status" value="1"/>
</dbReference>
<name>SDH_RHIRD</name>
<protein>
    <recommendedName>
        <fullName>Serine 3-dehydrogenase</fullName>
        <ecNumber evidence="3">1.1.1.276</ecNumber>
    </recommendedName>
</protein>
<feature type="initiator methionine" description="Removed" evidence="3">
    <location>
        <position position="1"/>
    </location>
</feature>
<feature type="chain" id="PRO_0000054773" description="Serine 3-dehydrogenase">
    <location>
        <begin position="2"/>
        <end position="249"/>
    </location>
</feature>
<feature type="active site" description="Proton acceptor" evidence="2">
    <location>
        <position position="148"/>
    </location>
</feature>
<feature type="binding site" evidence="1">
    <location>
        <begin position="6"/>
        <end position="30"/>
    </location>
    <ligand>
        <name>NADP(+)</name>
        <dbReference type="ChEBI" id="CHEBI:58349"/>
    </ligand>
</feature>
<feature type="binding site" evidence="1">
    <location>
        <position position="135"/>
    </location>
    <ligand>
        <name>substrate</name>
    </ligand>
</feature>
<reference key="1">
    <citation type="journal article" date="2002" name="Biosci. Biotechnol. Biochem.">
        <title>Cloning and sequencing of the serine dehydrogenase gene from Agrobacterium tumefaciens.</title>
        <authorList>
            <person name="Fujisawa H."/>
            <person name="Nagata S."/>
            <person name="Chowdhury E.K."/>
            <person name="Matsumoto M."/>
            <person name="Misono H."/>
        </authorList>
    </citation>
    <scope>NUCLEOTIDE SEQUENCE [GENOMIC DNA]</scope>
    <source>
        <strain>ICR 1600</strain>
    </source>
</reference>
<reference key="2">
    <citation type="journal article" date="1997" name="Biosci. Biotechnol. Biochem.">
        <title>A novel NADP(+)-dependent serine dehydrogenase from Agrobacterium tumefaciens.</title>
        <authorList>
            <person name="Chowdhury E.K."/>
            <person name="Higuchi K."/>
            <person name="Nagata S."/>
            <person name="Misono H."/>
        </authorList>
    </citation>
    <scope>PROTEIN SEQUENCE OF 2-28; 66-98; 128-194 AND 225-243</scope>
    <scope>FUNCTION</scope>
    <scope>CATALYTIC ACTIVITY</scope>
    <scope>SUBUNIT</scope>
    <scope>SUBSTRATE SPECIFICITY</scope>
    <scope>BIOPHYSICOCHEMICAL PROPERTIES</scope>
    <scope>CHARACTERIZATION</scope>
</reference>
<proteinExistence type="evidence at protein level"/>
<accession>Q9KWN1</accession>
<comment type="function">
    <text evidence="3">Catalyzes the oxidation of the hydroxyl group of serine to form 2-aminomalonate semialdehyde which is spontaneously converted into 2-aminoacetaldehyde and CO(2). Also acts on D-serine, L-glycerate, D-glycerate and 2-methyl-DL-serine. Does not act on O-methyl-DL-serine and L-threonine.</text>
</comment>
<comment type="catalytic activity">
    <reaction evidence="3">
        <text>L-serine + NADP(+) = aminoacetaldehyde + CO2 + NADPH</text>
        <dbReference type="Rhea" id="RHEA:43620"/>
        <dbReference type="ChEBI" id="CHEBI:16526"/>
        <dbReference type="ChEBI" id="CHEBI:33384"/>
        <dbReference type="ChEBI" id="CHEBI:57783"/>
        <dbReference type="ChEBI" id="CHEBI:58213"/>
        <dbReference type="ChEBI" id="CHEBI:58349"/>
        <dbReference type="EC" id="1.1.1.276"/>
    </reaction>
</comment>
<comment type="biophysicochemical properties">
    <kinetics>
        <KM evidence="3">42 mM for L-serine</KM>
        <KM evidence="3">44 mM for D-serine</KM>
        <KM evidence="3">54 mM for L-glycerate</KM>
        <KM evidence="3">56 mM for D-glycerate</KM>
        <KM evidence="3">0.029 mM for NADP(+)</KM>
    </kinetics>
    <phDependence>
        <text evidence="3">Optimum pH is 9.1.</text>
    </phDependence>
</comment>
<comment type="subunit">
    <text evidence="3">Homotetramer.</text>
</comment>
<comment type="similarity">
    <text evidence="4">Belongs to the short-chain dehydrogenases/reductases (SDR) family.</text>
</comment>
<sequence>MSGTILITGATSGFGQATAQRFVKEGWKVIGTGRRAERLEALSAELGSAFHGVAFDITDEEATKKALAGLPDGFRDIDILVNNAGLALGTAPAPQVPLKDWQTMVDTNITGLLNVTHHLLPTLIERKGIVINLSSVAAHYPYLGGNVYGGTKAFLRQFSLGLRSDLHGKGVRVTSIEPGMCETEFTLVRTGGNQEASDNLYKGVNPITADDIANTIHWVASQPKHININSLELMPVNQSFAGFQVYRES</sequence>